<comment type="function">
    <text evidence="1">Transcriptional regulator.</text>
</comment>
<comment type="cofactor">
    <cofactor evidence="1">
        <name>Ni(2+)</name>
        <dbReference type="ChEBI" id="CHEBI:49786"/>
    </cofactor>
    <text evidence="1">Binds 1 nickel ion per subunit.</text>
</comment>
<comment type="similarity">
    <text evidence="1">Belongs to the transcriptional regulatory CopG/NikR family.</text>
</comment>
<dbReference type="EMBL" id="AM180252">
    <property type="protein sequence ID" value="CAJ55144.1"/>
    <property type="molecule type" value="Genomic_DNA"/>
</dbReference>
<dbReference type="RefSeq" id="WP_011527173.1">
    <property type="nucleotide sequence ID" value="NC_008011.1"/>
</dbReference>
<dbReference type="SMR" id="Q1MPD3"/>
<dbReference type="STRING" id="363253.LI1090"/>
<dbReference type="KEGG" id="lip:LI1090"/>
<dbReference type="eggNOG" id="COG0864">
    <property type="taxonomic scope" value="Bacteria"/>
</dbReference>
<dbReference type="HOGENOM" id="CLU_113319_1_2_7"/>
<dbReference type="OrthoDB" id="9806294at2"/>
<dbReference type="Proteomes" id="UP000002430">
    <property type="component" value="Chromosome"/>
</dbReference>
<dbReference type="GO" id="GO:0003677">
    <property type="term" value="F:DNA binding"/>
    <property type="evidence" value="ECO:0007669"/>
    <property type="project" value="UniProtKB-KW"/>
</dbReference>
<dbReference type="GO" id="GO:0003700">
    <property type="term" value="F:DNA-binding transcription factor activity"/>
    <property type="evidence" value="ECO:0007669"/>
    <property type="project" value="UniProtKB-UniRule"/>
</dbReference>
<dbReference type="GO" id="GO:0016151">
    <property type="term" value="F:nickel cation binding"/>
    <property type="evidence" value="ECO:0007669"/>
    <property type="project" value="UniProtKB-UniRule"/>
</dbReference>
<dbReference type="GO" id="GO:0010045">
    <property type="term" value="P:response to nickel cation"/>
    <property type="evidence" value="ECO:0007669"/>
    <property type="project" value="InterPro"/>
</dbReference>
<dbReference type="CDD" id="cd22231">
    <property type="entry name" value="RHH_NikR_HicB-like"/>
    <property type="match status" value="1"/>
</dbReference>
<dbReference type="Gene3D" id="3.30.70.1150">
    <property type="entry name" value="ACT-like. Chain A, domain 2"/>
    <property type="match status" value="1"/>
</dbReference>
<dbReference type="Gene3D" id="1.10.1220.10">
    <property type="entry name" value="Met repressor-like"/>
    <property type="match status" value="1"/>
</dbReference>
<dbReference type="HAMAP" id="MF_00476">
    <property type="entry name" value="NikR"/>
    <property type="match status" value="1"/>
</dbReference>
<dbReference type="InterPro" id="IPR027271">
    <property type="entry name" value="Acetolactate_synth/TF_NikR_C"/>
</dbReference>
<dbReference type="InterPro" id="IPR045865">
    <property type="entry name" value="ACT-like_dom_sf"/>
</dbReference>
<dbReference type="InterPro" id="IPR013321">
    <property type="entry name" value="Arc_rbn_hlx_hlx"/>
</dbReference>
<dbReference type="InterPro" id="IPR002145">
    <property type="entry name" value="CopG"/>
</dbReference>
<dbReference type="InterPro" id="IPR050192">
    <property type="entry name" value="CopG/NikR_regulator"/>
</dbReference>
<dbReference type="InterPro" id="IPR022988">
    <property type="entry name" value="Ni_resp_reg_NikR"/>
</dbReference>
<dbReference type="InterPro" id="IPR010985">
    <property type="entry name" value="Ribbon_hlx_hlx"/>
</dbReference>
<dbReference type="InterPro" id="IPR014864">
    <property type="entry name" value="TF_NikR_Ni-bd_C"/>
</dbReference>
<dbReference type="NCBIfam" id="NF001884">
    <property type="entry name" value="PRK00630.1"/>
    <property type="match status" value="1"/>
</dbReference>
<dbReference type="NCBIfam" id="NF002169">
    <property type="entry name" value="PRK01002.1"/>
    <property type="match status" value="1"/>
</dbReference>
<dbReference type="NCBIfam" id="NF002815">
    <property type="entry name" value="PRK02967.1"/>
    <property type="match status" value="1"/>
</dbReference>
<dbReference type="NCBIfam" id="NF003381">
    <property type="entry name" value="PRK04460.1"/>
    <property type="match status" value="1"/>
</dbReference>
<dbReference type="PANTHER" id="PTHR34719">
    <property type="entry name" value="NICKEL-RESPONSIVE REGULATOR"/>
    <property type="match status" value="1"/>
</dbReference>
<dbReference type="PANTHER" id="PTHR34719:SF2">
    <property type="entry name" value="NICKEL-RESPONSIVE REGULATOR"/>
    <property type="match status" value="1"/>
</dbReference>
<dbReference type="Pfam" id="PF08753">
    <property type="entry name" value="NikR_C"/>
    <property type="match status" value="1"/>
</dbReference>
<dbReference type="Pfam" id="PF01402">
    <property type="entry name" value="RHH_1"/>
    <property type="match status" value="1"/>
</dbReference>
<dbReference type="SUPFAM" id="SSF55021">
    <property type="entry name" value="ACT-like"/>
    <property type="match status" value="1"/>
</dbReference>
<dbReference type="SUPFAM" id="SSF47598">
    <property type="entry name" value="Ribbon-helix-helix"/>
    <property type="match status" value="1"/>
</dbReference>
<name>NIKR_LAWIP</name>
<reference key="1">
    <citation type="submission" date="2005-11" db="EMBL/GenBank/DDBJ databases">
        <title>The complete genome sequence of Lawsonia intracellularis: the causative agent of proliferative enteropathy.</title>
        <authorList>
            <person name="Kaur K."/>
            <person name="Zhang Q."/>
            <person name="Beckler D."/>
            <person name="Munir S."/>
            <person name="Li L."/>
            <person name="Kinsley K."/>
            <person name="Herron L."/>
            <person name="Peterson A."/>
            <person name="May B."/>
            <person name="Singh S."/>
            <person name="Gebhart C."/>
            <person name="Kapur V."/>
        </authorList>
    </citation>
    <scope>NUCLEOTIDE SEQUENCE [LARGE SCALE GENOMIC DNA]</scope>
    <source>
        <strain>PHE/MN1-00</strain>
    </source>
</reference>
<protein>
    <recommendedName>
        <fullName evidence="1">Putative nickel-responsive regulator</fullName>
    </recommendedName>
</protein>
<accession>Q1MPD3</accession>
<sequence>MGETVRFGVSLDEDLLNKFDKLCDRQGYPSRSEALRDMIRQALAKDILQSKDSNAAGVLSLVYDHHTRELSRKLIERQHEMYDSIIATLHIHLDRYNCLEVLIIKGNGGKIQQLADMLCSIRGVKLGAFSFLPVEEDVF</sequence>
<keyword id="KW-0238">DNA-binding</keyword>
<keyword id="KW-0479">Metal-binding</keyword>
<keyword id="KW-0533">Nickel</keyword>
<keyword id="KW-1185">Reference proteome</keyword>
<keyword id="KW-0804">Transcription</keyword>
<keyword id="KW-0805">Transcription regulation</keyword>
<proteinExistence type="inferred from homology"/>
<gene>
    <name type="ordered locus">LI1090</name>
</gene>
<evidence type="ECO:0000255" key="1">
    <source>
        <dbReference type="HAMAP-Rule" id="MF_00476"/>
    </source>
</evidence>
<organism>
    <name type="scientific">Lawsonia intracellularis (strain PHE/MN1-00)</name>
    <dbReference type="NCBI Taxonomy" id="363253"/>
    <lineage>
        <taxon>Bacteria</taxon>
        <taxon>Pseudomonadati</taxon>
        <taxon>Thermodesulfobacteriota</taxon>
        <taxon>Desulfovibrionia</taxon>
        <taxon>Desulfovibrionales</taxon>
        <taxon>Desulfovibrionaceae</taxon>
        <taxon>Lawsonia</taxon>
    </lineage>
</organism>
<feature type="chain" id="PRO_1000125832" description="Putative nickel-responsive regulator">
    <location>
        <begin position="1"/>
        <end position="139"/>
    </location>
</feature>
<feature type="binding site" evidence="1">
    <location>
        <position position="79"/>
    </location>
    <ligand>
        <name>Ni(2+)</name>
        <dbReference type="ChEBI" id="CHEBI:49786"/>
    </ligand>
</feature>
<feature type="binding site" evidence="1">
    <location>
        <position position="90"/>
    </location>
    <ligand>
        <name>Ni(2+)</name>
        <dbReference type="ChEBI" id="CHEBI:49786"/>
    </ligand>
</feature>
<feature type="binding site" evidence="1">
    <location>
        <position position="92"/>
    </location>
    <ligand>
        <name>Ni(2+)</name>
        <dbReference type="ChEBI" id="CHEBI:49786"/>
    </ligand>
</feature>
<feature type="binding site" evidence="1">
    <location>
        <position position="98"/>
    </location>
    <ligand>
        <name>Ni(2+)</name>
        <dbReference type="ChEBI" id="CHEBI:49786"/>
    </ligand>
</feature>